<reference key="1">
    <citation type="journal article" date="2005" name="Nucleic Acids Res.">
        <title>The genome sequence of Salmonella enterica serovar Choleraesuis, a highly invasive and resistant zoonotic pathogen.</title>
        <authorList>
            <person name="Chiu C.-H."/>
            <person name="Tang P."/>
            <person name="Chu C."/>
            <person name="Hu S."/>
            <person name="Bao Q."/>
            <person name="Yu J."/>
            <person name="Chou Y.-Y."/>
            <person name="Wang H.-S."/>
            <person name="Lee Y.-S."/>
        </authorList>
    </citation>
    <scope>NUCLEOTIDE SEQUENCE [LARGE SCALE GENOMIC DNA]</scope>
    <source>
        <strain>SC-B67</strain>
    </source>
</reference>
<name>CMOA_SALCH</name>
<accession>Q57N92</accession>
<dbReference type="EC" id="2.1.3.-" evidence="1"/>
<dbReference type="EMBL" id="AE017220">
    <property type="protein sequence ID" value="AAX65819.1"/>
    <property type="molecule type" value="Genomic_DNA"/>
</dbReference>
<dbReference type="RefSeq" id="WP_000019615.1">
    <property type="nucleotide sequence ID" value="NC_006905.1"/>
</dbReference>
<dbReference type="SMR" id="Q57N92"/>
<dbReference type="KEGG" id="sec:SCH_1913"/>
<dbReference type="HOGENOM" id="CLU_078475_0_0_6"/>
<dbReference type="Proteomes" id="UP000000538">
    <property type="component" value="Chromosome"/>
</dbReference>
<dbReference type="GO" id="GO:0016743">
    <property type="term" value="F:carboxyl- or carbamoyltransferase activity"/>
    <property type="evidence" value="ECO:0007669"/>
    <property type="project" value="UniProtKB-UniRule"/>
</dbReference>
<dbReference type="GO" id="GO:1904047">
    <property type="term" value="F:S-adenosyl-L-methionine binding"/>
    <property type="evidence" value="ECO:0007669"/>
    <property type="project" value="UniProtKB-UniRule"/>
</dbReference>
<dbReference type="GO" id="GO:0002098">
    <property type="term" value="P:tRNA wobble uridine modification"/>
    <property type="evidence" value="ECO:0007669"/>
    <property type="project" value="InterPro"/>
</dbReference>
<dbReference type="CDD" id="cd02440">
    <property type="entry name" value="AdoMet_MTases"/>
    <property type="match status" value="1"/>
</dbReference>
<dbReference type="FunFam" id="3.40.50.150:FF:000030">
    <property type="entry name" value="Carboxy-S-adenosyl-L-methionine synthase"/>
    <property type="match status" value="1"/>
</dbReference>
<dbReference type="Gene3D" id="3.40.50.150">
    <property type="entry name" value="Vaccinia Virus protein VP39"/>
    <property type="match status" value="1"/>
</dbReference>
<dbReference type="HAMAP" id="MF_01589">
    <property type="entry name" value="Cx_SAM_synthase"/>
    <property type="match status" value="1"/>
</dbReference>
<dbReference type="InterPro" id="IPR005271">
    <property type="entry name" value="CmoA"/>
</dbReference>
<dbReference type="InterPro" id="IPR041698">
    <property type="entry name" value="Methyltransf_25"/>
</dbReference>
<dbReference type="InterPro" id="IPR029063">
    <property type="entry name" value="SAM-dependent_MTases_sf"/>
</dbReference>
<dbReference type="NCBIfam" id="TIGR00740">
    <property type="entry name" value="carboxy-S-adenosyl-L-methionine synthase CmoA"/>
    <property type="match status" value="1"/>
</dbReference>
<dbReference type="NCBIfam" id="NF011995">
    <property type="entry name" value="PRK15451.1"/>
    <property type="match status" value="1"/>
</dbReference>
<dbReference type="PANTHER" id="PTHR43861:SF2">
    <property type="entry name" value="CARBOXY-S-ADENOSYL-L-METHIONINE SYNTHASE"/>
    <property type="match status" value="1"/>
</dbReference>
<dbReference type="PANTHER" id="PTHR43861">
    <property type="entry name" value="TRANS-ACONITATE 2-METHYLTRANSFERASE-RELATED"/>
    <property type="match status" value="1"/>
</dbReference>
<dbReference type="Pfam" id="PF13649">
    <property type="entry name" value="Methyltransf_25"/>
    <property type="match status" value="1"/>
</dbReference>
<dbReference type="PIRSF" id="PIRSF006325">
    <property type="entry name" value="MeTrfase_bac"/>
    <property type="match status" value="1"/>
</dbReference>
<dbReference type="SUPFAM" id="SSF53335">
    <property type="entry name" value="S-adenosyl-L-methionine-dependent methyltransferases"/>
    <property type="match status" value="1"/>
</dbReference>
<organism>
    <name type="scientific">Salmonella choleraesuis (strain SC-B67)</name>
    <dbReference type="NCBI Taxonomy" id="321314"/>
    <lineage>
        <taxon>Bacteria</taxon>
        <taxon>Pseudomonadati</taxon>
        <taxon>Pseudomonadota</taxon>
        <taxon>Gammaproteobacteria</taxon>
        <taxon>Enterobacterales</taxon>
        <taxon>Enterobacteriaceae</taxon>
        <taxon>Salmonella</taxon>
    </lineage>
</organism>
<evidence type="ECO:0000255" key="1">
    <source>
        <dbReference type="HAMAP-Rule" id="MF_01589"/>
    </source>
</evidence>
<proteinExistence type="inferred from homology"/>
<protein>
    <recommendedName>
        <fullName evidence="1">Carboxy-S-adenosyl-L-methionine synthase</fullName>
        <shortName evidence="1">Cx-SAM synthase</shortName>
        <ecNumber evidence="1">2.1.3.-</ecNumber>
    </recommendedName>
</protein>
<feature type="chain" id="PRO_0000314371" description="Carboxy-S-adenosyl-L-methionine synthase">
    <location>
        <begin position="1"/>
        <end position="247"/>
    </location>
</feature>
<feature type="binding site" evidence="1">
    <location>
        <position position="39"/>
    </location>
    <ligand>
        <name>S-adenosyl-L-methionine</name>
        <dbReference type="ChEBI" id="CHEBI:59789"/>
    </ligand>
</feature>
<feature type="binding site" evidence="1">
    <location>
        <begin position="64"/>
        <end position="66"/>
    </location>
    <ligand>
        <name>S-adenosyl-L-methionine</name>
        <dbReference type="ChEBI" id="CHEBI:59789"/>
    </ligand>
</feature>
<feature type="binding site" evidence="1">
    <location>
        <begin position="89"/>
        <end position="90"/>
    </location>
    <ligand>
        <name>S-adenosyl-L-methionine</name>
        <dbReference type="ChEBI" id="CHEBI:59789"/>
    </ligand>
</feature>
<feature type="binding site" evidence="1">
    <location>
        <begin position="117"/>
        <end position="118"/>
    </location>
    <ligand>
        <name>S-adenosyl-L-methionine</name>
        <dbReference type="ChEBI" id="CHEBI:59789"/>
    </ligand>
</feature>
<feature type="binding site" evidence="1">
    <location>
        <position position="132"/>
    </location>
    <ligand>
        <name>S-adenosyl-L-methionine</name>
        <dbReference type="ChEBI" id="CHEBI:59789"/>
    </ligand>
</feature>
<feature type="binding site" evidence="1">
    <location>
        <position position="199"/>
    </location>
    <ligand>
        <name>S-adenosyl-L-methionine</name>
        <dbReference type="ChEBI" id="CHEBI:59789"/>
    </ligand>
</feature>
<comment type="function">
    <text evidence="1">Catalyzes the conversion of S-adenosyl-L-methionine (SAM) to carboxy-S-adenosyl-L-methionine (Cx-SAM).</text>
</comment>
<comment type="catalytic activity">
    <reaction evidence="1">
        <text>prephenate + S-adenosyl-L-methionine = carboxy-S-adenosyl-L-methionine + 3-phenylpyruvate + H2O</text>
        <dbReference type="Rhea" id="RHEA:51692"/>
        <dbReference type="ChEBI" id="CHEBI:15377"/>
        <dbReference type="ChEBI" id="CHEBI:18005"/>
        <dbReference type="ChEBI" id="CHEBI:29934"/>
        <dbReference type="ChEBI" id="CHEBI:59789"/>
        <dbReference type="ChEBI" id="CHEBI:134278"/>
    </reaction>
</comment>
<comment type="subunit">
    <text evidence="1">Homodimer.</text>
</comment>
<comment type="similarity">
    <text evidence="1">Belongs to the class I-like SAM-binding methyltransferase superfamily. Cx-SAM synthase family.</text>
</comment>
<sequence>MSHRDTLFSAPIARLGDWTFDERVAEVFPDMIQRSVPGYSNIISMIGMLAERFVQPNTQVYDLGCSLGAATLSVRRNIRHEHCRIIAVDNSPAMIERCRRHIDAYKAPTPVEVVEGDIRDITIENASMVVLNFTLQFLEPAERQALLDKIYQGLNPGGALVLSEKFSFEDAKVGELLFNMHHDFKRANGYSELEISQKRSMLENVMLTDSVETHKSRLRKAGFEHSELWFQCFNFGSLVALKAGVAA</sequence>
<keyword id="KW-0949">S-adenosyl-L-methionine</keyword>
<keyword id="KW-0808">Transferase</keyword>
<gene>
    <name evidence="1" type="primary">cmoA</name>
    <name type="ordered locus">SCH_1913</name>
</gene>